<reference key="1">
    <citation type="journal article" date="2014" name="Stand. Genomic Sci.">
        <title>Complete genome sequence of Anabaena variabilis ATCC 29413.</title>
        <authorList>
            <person name="Thiel T."/>
            <person name="Pratte B.S."/>
            <person name="Zhong J."/>
            <person name="Goodwin L."/>
            <person name="Copeland A."/>
            <person name="Lucas S."/>
            <person name="Han C."/>
            <person name="Pitluck S."/>
            <person name="Land M.L."/>
            <person name="Kyrpides N.C."/>
            <person name="Woyke T."/>
        </authorList>
    </citation>
    <scope>NUCLEOTIDE SEQUENCE [LARGE SCALE GENOMIC DNA]</scope>
    <source>
        <strain>ATCC 29413 / PCC 7937</strain>
    </source>
</reference>
<keyword id="KW-0963">Cytoplasm</keyword>
<keyword id="KW-0251">Elongation factor</keyword>
<keyword id="KW-0342">GTP-binding</keyword>
<keyword id="KW-0547">Nucleotide-binding</keyword>
<keyword id="KW-0648">Protein biosynthesis</keyword>
<evidence type="ECO:0000255" key="1">
    <source>
        <dbReference type="HAMAP-Rule" id="MF_00054"/>
    </source>
</evidence>
<gene>
    <name evidence="1" type="primary">fusA</name>
    <name type="ordered locus">Ava_1288</name>
</gene>
<sequence length="692" mass="76053">MARTNPLEKVRNIGIAAHIDAGKTTTTERILFYSGIIHKIGEVHEGTAVTDWMDQERERGITITAAAISTSWKDYQINIIDTPGHVDFTIEVERSMRVLDGVIAVFCSVGGVQPQSETVWRQADRYKVPRIAFINKMDRTGANFYRVHEQMRDRLRANAIAIQLPIGSENDFKGIVDLVRKRAYIYNNDQGTDIQETDIPADLQNQVEEYYTKLVEAVAETDDALMTKYFDGEALTEEEIRSALRQGTIAGTIVPVLCGSAFKNKGVQLMLDAVVDYLPAPTEVPPIQGTLANGDTVERRADDNEPLAALAFKIMADPYGRLTFVRVYSGVLKKGSYVLNATKNKKERISRLVLMKADDRQDVEELRAGDLGAALGLKDTLTGDTITDEGSPVILESLFIPEPVISVAVEPKTKNDMDKLSKALQSLSEEDPTFRVNVDPETNQTVIAGMGELHLEILVDRMLREFKVEANVGAPQVAYRETIRKSVTNVEGKFIRQSGGKGQYGHVVINLEPGEPGTGFEFVSKIVGGVVPKEYIGPAEQGMKESCESGILAGYPLIDVKATLVHGSYHDVDSSEMAFKIAGSMALKEAVLKASPVLLEPMMKVEVEVPEDYIGNVIGDLISRRGQIESQSTEQGLAKVASKVPLATMFGYATDIRSKTQGRGIFTMEFSHYEEVPRSVAETIIAKSKGNA</sequence>
<accession>Q3MDM4</accession>
<name>EFG_TRIV2</name>
<comment type="function">
    <text evidence="1">Catalyzes the GTP-dependent ribosomal translocation step during translation elongation. During this step, the ribosome changes from the pre-translocational (PRE) to the post-translocational (POST) state as the newly formed A-site-bound peptidyl-tRNA and P-site-bound deacylated tRNA move to the P and E sites, respectively. Catalyzes the coordinated movement of the two tRNA molecules, the mRNA and conformational changes in the ribosome.</text>
</comment>
<comment type="subcellular location">
    <subcellularLocation>
        <location evidence="1">Cytoplasm</location>
    </subcellularLocation>
</comment>
<comment type="similarity">
    <text evidence="1">Belongs to the TRAFAC class translation factor GTPase superfamily. Classic translation factor GTPase family. EF-G/EF-2 subfamily.</text>
</comment>
<feature type="chain" id="PRO_0000263422" description="Elongation factor G">
    <location>
        <begin position="1"/>
        <end position="692"/>
    </location>
</feature>
<feature type="domain" description="tr-type G">
    <location>
        <begin position="8"/>
        <end position="282"/>
    </location>
</feature>
<feature type="binding site" evidence="1">
    <location>
        <begin position="17"/>
        <end position="24"/>
    </location>
    <ligand>
        <name>GTP</name>
        <dbReference type="ChEBI" id="CHEBI:37565"/>
    </ligand>
</feature>
<feature type="binding site" evidence="1">
    <location>
        <begin position="81"/>
        <end position="85"/>
    </location>
    <ligand>
        <name>GTP</name>
        <dbReference type="ChEBI" id="CHEBI:37565"/>
    </ligand>
</feature>
<feature type="binding site" evidence="1">
    <location>
        <begin position="135"/>
        <end position="138"/>
    </location>
    <ligand>
        <name>GTP</name>
        <dbReference type="ChEBI" id="CHEBI:37565"/>
    </ligand>
</feature>
<organism>
    <name type="scientific">Trichormus variabilis (strain ATCC 29413 / PCC 7937)</name>
    <name type="common">Anabaena variabilis</name>
    <dbReference type="NCBI Taxonomy" id="240292"/>
    <lineage>
        <taxon>Bacteria</taxon>
        <taxon>Bacillati</taxon>
        <taxon>Cyanobacteriota</taxon>
        <taxon>Cyanophyceae</taxon>
        <taxon>Nostocales</taxon>
        <taxon>Nostocaceae</taxon>
        <taxon>Trichormus</taxon>
    </lineage>
</organism>
<dbReference type="EMBL" id="CP000117">
    <property type="protein sequence ID" value="ABA20912.1"/>
    <property type="molecule type" value="Genomic_DNA"/>
</dbReference>
<dbReference type="SMR" id="Q3MDM4"/>
<dbReference type="STRING" id="240292.Ava_1288"/>
<dbReference type="KEGG" id="ava:Ava_1288"/>
<dbReference type="eggNOG" id="COG0480">
    <property type="taxonomic scope" value="Bacteria"/>
</dbReference>
<dbReference type="HOGENOM" id="CLU_002794_4_1_3"/>
<dbReference type="Proteomes" id="UP000002533">
    <property type="component" value="Chromosome"/>
</dbReference>
<dbReference type="GO" id="GO:0005737">
    <property type="term" value="C:cytoplasm"/>
    <property type="evidence" value="ECO:0007669"/>
    <property type="project" value="UniProtKB-SubCell"/>
</dbReference>
<dbReference type="GO" id="GO:0005525">
    <property type="term" value="F:GTP binding"/>
    <property type="evidence" value="ECO:0007669"/>
    <property type="project" value="UniProtKB-UniRule"/>
</dbReference>
<dbReference type="GO" id="GO:0003924">
    <property type="term" value="F:GTPase activity"/>
    <property type="evidence" value="ECO:0007669"/>
    <property type="project" value="InterPro"/>
</dbReference>
<dbReference type="GO" id="GO:0003746">
    <property type="term" value="F:translation elongation factor activity"/>
    <property type="evidence" value="ECO:0007669"/>
    <property type="project" value="UniProtKB-UniRule"/>
</dbReference>
<dbReference type="GO" id="GO:0032790">
    <property type="term" value="P:ribosome disassembly"/>
    <property type="evidence" value="ECO:0007669"/>
    <property type="project" value="TreeGrafter"/>
</dbReference>
<dbReference type="CDD" id="cd01886">
    <property type="entry name" value="EF-G"/>
    <property type="match status" value="1"/>
</dbReference>
<dbReference type="CDD" id="cd16262">
    <property type="entry name" value="EFG_III"/>
    <property type="match status" value="1"/>
</dbReference>
<dbReference type="CDD" id="cd01434">
    <property type="entry name" value="EFG_mtEFG1_IV"/>
    <property type="match status" value="1"/>
</dbReference>
<dbReference type="CDD" id="cd03713">
    <property type="entry name" value="EFG_mtEFG_C"/>
    <property type="match status" value="1"/>
</dbReference>
<dbReference type="CDD" id="cd04088">
    <property type="entry name" value="EFG_mtEFG_II"/>
    <property type="match status" value="1"/>
</dbReference>
<dbReference type="FunFam" id="2.40.30.10:FF:000006">
    <property type="entry name" value="Elongation factor G"/>
    <property type="match status" value="1"/>
</dbReference>
<dbReference type="FunFam" id="3.30.230.10:FF:000003">
    <property type="entry name" value="Elongation factor G"/>
    <property type="match status" value="1"/>
</dbReference>
<dbReference type="FunFam" id="3.30.70.240:FF:000001">
    <property type="entry name" value="Elongation factor G"/>
    <property type="match status" value="1"/>
</dbReference>
<dbReference type="FunFam" id="3.30.70.870:FF:000001">
    <property type="entry name" value="Elongation factor G"/>
    <property type="match status" value="1"/>
</dbReference>
<dbReference type="FunFam" id="3.40.50.300:FF:000029">
    <property type="entry name" value="Elongation factor G"/>
    <property type="match status" value="1"/>
</dbReference>
<dbReference type="Gene3D" id="3.30.230.10">
    <property type="match status" value="1"/>
</dbReference>
<dbReference type="Gene3D" id="3.30.70.240">
    <property type="match status" value="1"/>
</dbReference>
<dbReference type="Gene3D" id="3.30.70.870">
    <property type="entry name" value="Elongation Factor G (Translational Gtpase), domain 3"/>
    <property type="match status" value="1"/>
</dbReference>
<dbReference type="Gene3D" id="3.40.50.300">
    <property type="entry name" value="P-loop containing nucleotide triphosphate hydrolases"/>
    <property type="match status" value="1"/>
</dbReference>
<dbReference type="Gene3D" id="2.40.30.10">
    <property type="entry name" value="Translation factors"/>
    <property type="match status" value="1"/>
</dbReference>
<dbReference type="HAMAP" id="MF_00054_B">
    <property type="entry name" value="EF_G_EF_2_B"/>
    <property type="match status" value="1"/>
</dbReference>
<dbReference type="InterPro" id="IPR041095">
    <property type="entry name" value="EFG_II"/>
</dbReference>
<dbReference type="InterPro" id="IPR009022">
    <property type="entry name" value="EFG_III"/>
</dbReference>
<dbReference type="InterPro" id="IPR035647">
    <property type="entry name" value="EFG_III/V"/>
</dbReference>
<dbReference type="InterPro" id="IPR047872">
    <property type="entry name" value="EFG_IV"/>
</dbReference>
<dbReference type="InterPro" id="IPR035649">
    <property type="entry name" value="EFG_V"/>
</dbReference>
<dbReference type="InterPro" id="IPR000640">
    <property type="entry name" value="EFG_V-like"/>
</dbReference>
<dbReference type="InterPro" id="IPR004161">
    <property type="entry name" value="EFTu-like_2"/>
</dbReference>
<dbReference type="InterPro" id="IPR031157">
    <property type="entry name" value="G_TR_CS"/>
</dbReference>
<dbReference type="InterPro" id="IPR027417">
    <property type="entry name" value="P-loop_NTPase"/>
</dbReference>
<dbReference type="InterPro" id="IPR020568">
    <property type="entry name" value="Ribosomal_Su5_D2-typ_SF"/>
</dbReference>
<dbReference type="InterPro" id="IPR014721">
    <property type="entry name" value="Ribsml_uS5_D2-typ_fold_subgr"/>
</dbReference>
<dbReference type="InterPro" id="IPR005225">
    <property type="entry name" value="Small_GTP-bd"/>
</dbReference>
<dbReference type="InterPro" id="IPR000795">
    <property type="entry name" value="T_Tr_GTP-bd_dom"/>
</dbReference>
<dbReference type="InterPro" id="IPR009000">
    <property type="entry name" value="Transl_B-barrel_sf"/>
</dbReference>
<dbReference type="InterPro" id="IPR004540">
    <property type="entry name" value="Transl_elong_EFG/EF2"/>
</dbReference>
<dbReference type="InterPro" id="IPR005517">
    <property type="entry name" value="Transl_elong_EFG/EF2_IV"/>
</dbReference>
<dbReference type="NCBIfam" id="TIGR00484">
    <property type="entry name" value="EF-G"/>
    <property type="match status" value="1"/>
</dbReference>
<dbReference type="NCBIfam" id="NF009379">
    <property type="entry name" value="PRK12740.1-3"/>
    <property type="match status" value="1"/>
</dbReference>
<dbReference type="NCBIfam" id="NF009381">
    <property type="entry name" value="PRK12740.1-5"/>
    <property type="match status" value="1"/>
</dbReference>
<dbReference type="NCBIfam" id="TIGR00231">
    <property type="entry name" value="small_GTP"/>
    <property type="match status" value="1"/>
</dbReference>
<dbReference type="PANTHER" id="PTHR43261:SF1">
    <property type="entry name" value="RIBOSOME-RELEASING FACTOR 2, MITOCHONDRIAL"/>
    <property type="match status" value="1"/>
</dbReference>
<dbReference type="PANTHER" id="PTHR43261">
    <property type="entry name" value="TRANSLATION ELONGATION FACTOR G-RELATED"/>
    <property type="match status" value="1"/>
</dbReference>
<dbReference type="Pfam" id="PF00679">
    <property type="entry name" value="EFG_C"/>
    <property type="match status" value="1"/>
</dbReference>
<dbReference type="Pfam" id="PF14492">
    <property type="entry name" value="EFG_III"/>
    <property type="match status" value="1"/>
</dbReference>
<dbReference type="Pfam" id="PF03764">
    <property type="entry name" value="EFG_IV"/>
    <property type="match status" value="1"/>
</dbReference>
<dbReference type="Pfam" id="PF00009">
    <property type="entry name" value="GTP_EFTU"/>
    <property type="match status" value="1"/>
</dbReference>
<dbReference type="Pfam" id="PF03144">
    <property type="entry name" value="GTP_EFTU_D2"/>
    <property type="match status" value="1"/>
</dbReference>
<dbReference type="PRINTS" id="PR00315">
    <property type="entry name" value="ELONGATNFCT"/>
</dbReference>
<dbReference type="SMART" id="SM00838">
    <property type="entry name" value="EFG_C"/>
    <property type="match status" value="1"/>
</dbReference>
<dbReference type="SMART" id="SM00889">
    <property type="entry name" value="EFG_IV"/>
    <property type="match status" value="1"/>
</dbReference>
<dbReference type="SUPFAM" id="SSF54980">
    <property type="entry name" value="EF-G C-terminal domain-like"/>
    <property type="match status" value="2"/>
</dbReference>
<dbReference type="SUPFAM" id="SSF52540">
    <property type="entry name" value="P-loop containing nucleoside triphosphate hydrolases"/>
    <property type="match status" value="1"/>
</dbReference>
<dbReference type="SUPFAM" id="SSF54211">
    <property type="entry name" value="Ribosomal protein S5 domain 2-like"/>
    <property type="match status" value="1"/>
</dbReference>
<dbReference type="SUPFAM" id="SSF50447">
    <property type="entry name" value="Translation proteins"/>
    <property type="match status" value="1"/>
</dbReference>
<dbReference type="PROSITE" id="PS00301">
    <property type="entry name" value="G_TR_1"/>
    <property type="match status" value="1"/>
</dbReference>
<dbReference type="PROSITE" id="PS51722">
    <property type="entry name" value="G_TR_2"/>
    <property type="match status" value="1"/>
</dbReference>
<protein>
    <recommendedName>
        <fullName evidence="1">Elongation factor G</fullName>
        <shortName evidence="1">EF-G</shortName>
    </recommendedName>
</protein>
<proteinExistence type="inferred from homology"/>